<proteinExistence type="inferred from homology"/>
<gene>
    <name evidence="1" type="primary">gcvT</name>
    <name type="ordered locus">SynWH7803_2457</name>
</gene>
<sequence>MDLHRTPLHDLCVTTGGRMVPFAGWEMPVQFSGLVAEHTAVRQRVGLFDISHMGVLRIEGSNPKDALQTLVPTDLHRIGPGQACYSVLLNESGGIRDDLIVYDLGQTNSDQGEASLIVVINAACAAADTAWISEQLTPQGLKVTDEKGDGILLALQGPEALARMEQLSGVDLHALPRFAHRMLDLTGLSRPVFCARTGYTGEDGVELLLAREDGRNLWNRLVADGVTPCGLGARDTLRLEAAMHLYGQDMDADTTPFEAGLGWLVHLEMPSTFTGRAALERAADSGPSRRLVGLKLKGRAIARHGYPVIHNGEQAGAITSGSWSPTLQEAIALAYVPTALAKVGQELGVEIRGQVQAATVVRRPFYRHP</sequence>
<accession>A5GPL8</accession>
<reference key="1">
    <citation type="submission" date="2006-05" db="EMBL/GenBank/DDBJ databases">
        <authorList>
            <consortium name="Genoscope"/>
        </authorList>
    </citation>
    <scope>NUCLEOTIDE SEQUENCE [LARGE SCALE GENOMIC DNA]</scope>
    <source>
        <strain>WH7803</strain>
    </source>
</reference>
<evidence type="ECO:0000255" key="1">
    <source>
        <dbReference type="HAMAP-Rule" id="MF_00259"/>
    </source>
</evidence>
<comment type="function">
    <text evidence="1">The glycine cleavage system catalyzes the degradation of glycine.</text>
</comment>
<comment type="catalytic activity">
    <reaction evidence="1">
        <text>N(6)-[(R)-S(8)-aminomethyldihydrolipoyl]-L-lysyl-[protein] + (6S)-5,6,7,8-tetrahydrofolate = N(6)-[(R)-dihydrolipoyl]-L-lysyl-[protein] + (6R)-5,10-methylene-5,6,7,8-tetrahydrofolate + NH4(+)</text>
        <dbReference type="Rhea" id="RHEA:16945"/>
        <dbReference type="Rhea" id="RHEA-COMP:10475"/>
        <dbReference type="Rhea" id="RHEA-COMP:10492"/>
        <dbReference type="ChEBI" id="CHEBI:15636"/>
        <dbReference type="ChEBI" id="CHEBI:28938"/>
        <dbReference type="ChEBI" id="CHEBI:57453"/>
        <dbReference type="ChEBI" id="CHEBI:83100"/>
        <dbReference type="ChEBI" id="CHEBI:83143"/>
        <dbReference type="EC" id="2.1.2.10"/>
    </reaction>
</comment>
<comment type="subunit">
    <text evidence="1">The glycine cleavage system is composed of four proteins: P, T, L and H.</text>
</comment>
<comment type="similarity">
    <text evidence="1">Belongs to the GcvT family.</text>
</comment>
<name>GCST_SYNPW</name>
<organism>
    <name type="scientific">Synechococcus sp. (strain WH7803)</name>
    <dbReference type="NCBI Taxonomy" id="32051"/>
    <lineage>
        <taxon>Bacteria</taxon>
        <taxon>Bacillati</taxon>
        <taxon>Cyanobacteriota</taxon>
        <taxon>Cyanophyceae</taxon>
        <taxon>Synechococcales</taxon>
        <taxon>Synechococcaceae</taxon>
        <taxon>Synechococcus</taxon>
    </lineage>
</organism>
<keyword id="KW-0032">Aminotransferase</keyword>
<keyword id="KW-1185">Reference proteome</keyword>
<keyword id="KW-0808">Transferase</keyword>
<dbReference type="EC" id="2.1.2.10" evidence="1"/>
<dbReference type="EMBL" id="CT971583">
    <property type="protein sequence ID" value="CAK24883.1"/>
    <property type="molecule type" value="Genomic_DNA"/>
</dbReference>
<dbReference type="SMR" id="A5GPL8"/>
<dbReference type="STRING" id="32051.SynWH7803_2457"/>
<dbReference type="KEGG" id="syx:SynWH7803_2457"/>
<dbReference type="eggNOG" id="COG0404">
    <property type="taxonomic scope" value="Bacteria"/>
</dbReference>
<dbReference type="HOGENOM" id="CLU_007884_10_2_3"/>
<dbReference type="OrthoDB" id="9774591at2"/>
<dbReference type="Proteomes" id="UP000001566">
    <property type="component" value="Chromosome"/>
</dbReference>
<dbReference type="GO" id="GO:0005829">
    <property type="term" value="C:cytosol"/>
    <property type="evidence" value="ECO:0007669"/>
    <property type="project" value="TreeGrafter"/>
</dbReference>
<dbReference type="GO" id="GO:0005960">
    <property type="term" value="C:glycine cleavage complex"/>
    <property type="evidence" value="ECO:0007669"/>
    <property type="project" value="InterPro"/>
</dbReference>
<dbReference type="GO" id="GO:0004047">
    <property type="term" value="F:aminomethyltransferase activity"/>
    <property type="evidence" value="ECO:0007669"/>
    <property type="project" value="UniProtKB-UniRule"/>
</dbReference>
<dbReference type="GO" id="GO:0008483">
    <property type="term" value="F:transaminase activity"/>
    <property type="evidence" value="ECO:0007669"/>
    <property type="project" value="UniProtKB-KW"/>
</dbReference>
<dbReference type="GO" id="GO:0019464">
    <property type="term" value="P:glycine decarboxylation via glycine cleavage system"/>
    <property type="evidence" value="ECO:0007669"/>
    <property type="project" value="UniProtKB-UniRule"/>
</dbReference>
<dbReference type="FunFam" id="2.40.30.110:FF:000003">
    <property type="entry name" value="Aminomethyltransferase"/>
    <property type="match status" value="1"/>
</dbReference>
<dbReference type="FunFam" id="3.30.70.1400:FF:000001">
    <property type="entry name" value="Aminomethyltransferase"/>
    <property type="match status" value="1"/>
</dbReference>
<dbReference type="FunFam" id="4.10.1250.10:FF:000001">
    <property type="entry name" value="Aminomethyltransferase"/>
    <property type="match status" value="1"/>
</dbReference>
<dbReference type="Gene3D" id="2.40.30.110">
    <property type="entry name" value="Aminomethyltransferase beta-barrel domains"/>
    <property type="match status" value="1"/>
</dbReference>
<dbReference type="Gene3D" id="3.30.70.1400">
    <property type="entry name" value="Aminomethyltransferase beta-barrel domains"/>
    <property type="match status" value="1"/>
</dbReference>
<dbReference type="Gene3D" id="4.10.1250.10">
    <property type="entry name" value="Aminomethyltransferase fragment"/>
    <property type="match status" value="1"/>
</dbReference>
<dbReference type="Gene3D" id="3.30.1360.120">
    <property type="entry name" value="Probable tRNA modification gtpase trme, domain 1"/>
    <property type="match status" value="1"/>
</dbReference>
<dbReference type="HAMAP" id="MF_00259">
    <property type="entry name" value="GcvT"/>
    <property type="match status" value="1"/>
</dbReference>
<dbReference type="InterPro" id="IPR006223">
    <property type="entry name" value="GCS_T"/>
</dbReference>
<dbReference type="InterPro" id="IPR022903">
    <property type="entry name" value="GCS_T_bac"/>
</dbReference>
<dbReference type="InterPro" id="IPR013977">
    <property type="entry name" value="GCST_C"/>
</dbReference>
<dbReference type="InterPro" id="IPR006222">
    <property type="entry name" value="GCV_T_N"/>
</dbReference>
<dbReference type="InterPro" id="IPR028896">
    <property type="entry name" value="GcvT/YgfZ/DmdA"/>
</dbReference>
<dbReference type="InterPro" id="IPR029043">
    <property type="entry name" value="GcvT/YgfZ_C"/>
</dbReference>
<dbReference type="InterPro" id="IPR027266">
    <property type="entry name" value="TrmE/GcvT_dom1"/>
</dbReference>
<dbReference type="NCBIfam" id="TIGR00528">
    <property type="entry name" value="gcvT"/>
    <property type="match status" value="1"/>
</dbReference>
<dbReference type="NCBIfam" id="NF001567">
    <property type="entry name" value="PRK00389.1"/>
    <property type="match status" value="1"/>
</dbReference>
<dbReference type="PANTHER" id="PTHR43757">
    <property type="entry name" value="AMINOMETHYLTRANSFERASE"/>
    <property type="match status" value="1"/>
</dbReference>
<dbReference type="PANTHER" id="PTHR43757:SF2">
    <property type="entry name" value="AMINOMETHYLTRANSFERASE, MITOCHONDRIAL"/>
    <property type="match status" value="1"/>
</dbReference>
<dbReference type="Pfam" id="PF01571">
    <property type="entry name" value="GCV_T"/>
    <property type="match status" value="1"/>
</dbReference>
<dbReference type="Pfam" id="PF08669">
    <property type="entry name" value="GCV_T_C"/>
    <property type="match status" value="1"/>
</dbReference>
<dbReference type="PIRSF" id="PIRSF006487">
    <property type="entry name" value="GcvT"/>
    <property type="match status" value="1"/>
</dbReference>
<dbReference type="SUPFAM" id="SSF101790">
    <property type="entry name" value="Aminomethyltransferase beta-barrel domain"/>
    <property type="match status" value="1"/>
</dbReference>
<dbReference type="SUPFAM" id="SSF103025">
    <property type="entry name" value="Folate-binding domain"/>
    <property type="match status" value="1"/>
</dbReference>
<feature type="chain" id="PRO_1000047720" description="Aminomethyltransferase">
    <location>
        <begin position="1"/>
        <end position="369"/>
    </location>
</feature>
<protein>
    <recommendedName>
        <fullName evidence="1">Aminomethyltransferase</fullName>
        <ecNumber evidence="1">2.1.2.10</ecNumber>
    </recommendedName>
    <alternativeName>
        <fullName evidence="1">Glycine cleavage system T protein</fullName>
    </alternativeName>
</protein>